<proteinExistence type="inferred from homology"/>
<evidence type="ECO:0000255" key="1">
    <source>
        <dbReference type="HAMAP-Rule" id="MF_00303"/>
    </source>
</evidence>
<evidence type="ECO:0000256" key="2">
    <source>
        <dbReference type="SAM" id="MobiDB-lite"/>
    </source>
</evidence>
<keyword id="KW-0131">Cell cycle</keyword>
<keyword id="KW-0132">Cell division</keyword>
<keyword id="KW-0143">Chaperone</keyword>
<keyword id="KW-0963">Cytoplasm</keyword>
<keyword id="KW-0413">Isomerase</keyword>
<keyword id="KW-0697">Rotamase</keyword>
<name>TIG_RHIE6</name>
<comment type="function">
    <text evidence="1">Involved in protein export. Acts as a chaperone by maintaining the newly synthesized protein in an open conformation. Functions as a peptidyl-prolyl cis-trans isomerase.</text>
</comment>
<comment type="catalytic activity">
    <reaction evidence="1">
        <text>[protein]-peptidylproline (omega=180) = [protein]-peptidylproline (omega=0)</text>
        <dbReference type="Rhea" id="RHEA:16237"/>
        <dbReference type="Rhea" id="RHEA-COMP:10747"/>
        <dbReference type="Rhea" id="RHEA-COMP:10748"/>
        <dbReference type="ChEBI" id="CHEBI:83833"/>
        <dbReference type="ChEBI" id="CHEBI:83834"/>
        <dbReference type="EC" id="5.2.1.8"/>
    </reaction>
</comment>
<comment type="subcellular location">
    <subcellularLocation>
        <location>Cytoplasm</location>
    </subcellularLocation>
    <text evidence="1">About half TF is bound to the ribosome near the polypeptide exit tunnel while the other half is free in the cytoplasm.</text>
</comment>
<comment type="domain">
    <text evidence="1">Consists of 3 domains; the N-terminus binds the ribosome, the middle domain has PPIase activity, while the C-terminus has intrinsic chaperone activity on its own.</text>
</comment>
<comment type="similarity">
    <text evidence="1">Belongs to the FKBP-type PPIase family. Tig subfamily.</text>
</comment>
<reference key="1">
    <citation type="journal article" date="2010" name="Appl. Environ. Microbiol.">
        <title>Conserved symbiotic plasmid DNA sequences in the multireplicon pangenomic structure of Rhizobium etli.</title>
        <authorList>
            <person name="Gonzalez V."/>
            <person name="Acosta J.L."/>
            <person name="Santamaria R.I."/>
            <person name="Bustos P."/>
            <person name="Fernandez J.L."/>
            <person name="Hernandez Gonzalez I.L."/>
            <person name="Diaz R."/>
            <person name="Flores M."/>
            <person name="Palacios R."/>
            <person name="Mora J."/>
            <person name="Davila G."/>
        </authorList>
    </citation>
    <scope>NUCLEOTIDE SEQUENCE [LARGE SCALE GENOMIC DNA]</scope>
    <source>
        <strain>CIAT 652</strain>
    </source>
</reference>
<dbReference type="EC" id="5.2.1.8" evidence="1"/>
<dbReference type="EMBL" id="CP001074">
    <property type="protein sequence ID" value="ACE90895.1"/>
    <property type="molecule type" value="Genomic_DNA"/>
</dbReference>
<dbReference type="SMR" id="B3PXV9"/>
<dbReference type="KEGG" id="rec:RHECIAT_CH0001929"/>
<dbReference type="eggNOG" id="COG0544">
    <property type="taxonomic scope" value="Bacteria"/>
</dbReference>
<dbReference type="HOGENOM" id="CLU_033058_2_2_5"/>
<dbReference type="Proteomes" id="UP000008817">
    <property type="component" value="Chromosome"/>
</dbReference>
<dbReference type="GO" id="GO:0005737">
    <property type="term" value="C:cytoplasm"/>
    <property type="evidence" value="ECO:0007669"/>
    <property type="project" value="UniProtKB-SubCell"/>
</dbReference>
<dbReference type="GO" id="GO:0003755">
    <property type="term" value="F:peptidyl-prolyl cis-trans isomerase activity"/>
    <property type="evidence" value="ECO:0007669"/>
    <property type="project" value="UniProtKB-UniRule"/>
</dbReference>
<dbReference type="GO" id="GO:0044183">
    <property type="term" value="F:protein folding chaperone"/>
    <property type="evidence" value="ECO:0007669"/>
    <property type="project" value="TreeGrafter"/>
</dbReference>
<dbReference type="GO" id="GO:0043022">
    <property type="term" value="F:ribosome binding"/>
    <property type="evidence" value="ECO:0007669"/>
    <property type="project" value="TreeGrafter"/>
</dbReference>
<dbReference type="GO" id="GO:0051083">
    <property type="term" value="P:'de novo' cotranslational protein folding"/>
    <property type="evidence" value="ECO:0007669"/>
    <property type="project" value="TreeGrafter"/>
</dbReference>
<dbReference type="GO" id="GO:0051301">
    <property type="term" value="P:cell division"/>
    <property type="evidence" value="ECO:0007669"/>
    <property type="project" value="UniProtKB-KW"/>
</dbReference>
<dbReference type="GO" id="GO:0061077">
    <property type="term" value="P:chaperone-mediated protein folding"/>
    <property type="evidence" value="ECO:0007669"/>
    <property type="project" value="TreeGrafter"/>
</dbReference>
<dbReference type="GO" id="GO:0015031">
    <property type="term" value="P:protein transport"/>
    <property type="evidence" value="ECO:0007669"/>
    <property type="project" value="UniProtKB-UniRule"/>
</dbReference>
<dbReference type="GO" id="GO:0043335">
    <property type="term" value="P:protein unfolding"/>
    <property type="evidence" value="ECO:0007669"/>
    <property type="project" value="TreeGrafter"/>
</dbReference>
<dbReference type="FunFam" id="3.10.50.40:FF:000001">
    <property type="entry name" value="Trigger factor"/>
    <property type="match status" value="1"/>
</dbReference>
<dbReference type="Gene3D" id="3.10.50.40">
    <property type="match status" value="1"/>
</dbReference>
<dbReference type="Gene3D" id="3.30.70.1050">
    <property type="entry name" value="Trigger factor ribosome-binding domain"/>
    <property type="match status" value="1"/>
</dbReference>
<dbReference type="Gene3D" id="1.10.3120.10">
    <property type="entry name" value="Trigger factor, C-terminal domain"/>
    <property type="match status" value="1"/>
</dbReference>
<dbReference type="HAMAP" id="MF_00303">
    <property type="entry name" value="Trigger_factor_Tig"/>
    <property type="match status" value="1"/>
</dbReference>
<dbReference type="InterPro" id="IPR046357">
    <property type="entry name" value="PPIase_dom_sf"/>
</dbReference>
<dbReference type="InterPro" id="IPR001179">
    <property type="entry name" value="PPIase_FKBP_dom"/>
</dbReference>
<dbReference type="InterPro" id="IPR005215">
    <property type="entry name" value="Trig_fac"/>
</dbReference>
<dbReference type="InterPro" id="IPR008880">
    <property type="entry name" value="Trigger_fac_C"/>
</dbReference>
<dbReference type="InterPro" id="IPR037041">
    <property type="entry name" value="Trigger_fac_C_sf"/>
</dbReference>
<dbReference type="InterPro" id="IPR008881">
    <property type="entry name" value="Trigger_fac_ribosome-bd_bac"/>
</dbReference>
<dbReference type="InterPro" id="IPR036611">
    <property type="entry name" value="Trigger_fac_ribosome-bd_sf"/>
</dbReference>
<dbReference type="InterPro" id="IPR027304">
    <property type="entry name" value="Trigger_fact/SurA_dom_sf"/>
</dbReference>
<dbReference type="NCBIfam" id="TIGR00115">
    <property type="entry name" value="tig"/>
    <property type="match status" value="1"/>
</dbReference>
<dbReference type="PANTHER" id="PTHR30560">
    <property type="entry name" value="TRIGGER FACTOR CHAPERONE AND PEPTIDYL-PROLYL CIS/TRANS ISOMERASE"/>
    <property type="match status" value="1"/>
</dbReference>
<dbReference type="PANTHER" id="PTHR30560:SF3">
    <property type="entry name" value="TRIGGER FACTOR-LIKE PROTEIN TIG, CHLOROPLASTIC"/>
    <property type="match status" value="1"/>
</dbReference>
<dbReference type="Pfam" id="PF00254">
    <property type="entry name" value="FKBP_C"/>
    <property type="match status" value="1"/>
</dbReference>
<dbReference type="Pfam" id="PF05698">
    <property type="entry name" value="Trigger_C"/>
    <property type="match status" value="1"/>
</dbReference>
<dbReference type="Pfam" id="PF05697">
    <property type="entry name" value="Trigger_N"/>
    <property type="match status" value="1"/>
</dbReference>
<dbReference type="PIRSF" id="PIRSF003095">
    <property type="entry name" value="Trigger_factor"/>
    <property type="match status" value="1"/>
</dbReference>
<dbReference type="SUPFAM" id="SSF54534">
    <property type="entry name" value="FKBP-like"/>
    <property type="match status" value="1"/>
</dbReference>
<dbReference type="SUPFAM" id="SSF109998">
    <property type="entry name" value="Triger factor/SurA peptide-binding domain-like"/>
    <property type="match status" value="1"/>
</dbReference>
<dbReference type="SUPFAM" id="SSF102735">
    <property type="entry name" value="Trigger factor ribosome-binding domain"/>
    <property type="match status" value="1"/>
</dbReference>
<dbReference type="PROSITE" id="PS50059">
    <property type="entry name" value="FKBP_PPIASE"/>
    <property type="match status" value="1"/>
</dbReference>
<gene>
    <name evidence="1" type="primary">tig</name>
    <name type="ordered locus">RHECIAT_CH0001929</name>
</gene>
<sequence>MQVIETLAEGLKREIKVVIPAKDMEDKMNERLADVKDKIRINGFRPGKVPAAHLKKVYGKSIMAELVNEIVREQPTAILSSRGEKSATQPEIAMTEDKDEADKILSAQQDFEFTLSYEVLPPIELKSVKGIKVTREVIDISDDEVTEQVLKVAESARSYESKTGKAANGDRVAMDYVGKVDGEAFEGGTDQGAELVIGSGRFIPGFEDQLVGVKAGEEKTITVTFPADYPAKNLAGKEATFDITVKDVAAPGAVEINDELASKLGIESADRLKEIVRGQIESQYGSLTRQKLKRQILDQLDEMYKFETPASLVDAEYNGIWSQVNNDLAQSGKTFEDEDTTEEKAREEYKTLAERRVRLGLVLSEIGEKAGVEVTEDEMQRAIYDQLRQYPGQEKQILEFFRSQPGAAASIRAPIFEEKVIDHLLTEIDVTDKKVTKEELLAEDEGEAKAETKKAAPKKKAAAKTEAAEAGEGEEAAAPKKKAAPKKKAADESAE</sequence>
<feature type="chain" id="PRO_1000115569" description="Trigger factor">
    <location>
        <begin position="1"/>
        <end position="495"/>
    </location>
</feature>
<feature type="domain" description="PPIase FKBP-type" evidence="1">
    <location>
        <begin position="169"/>
        <end position="254"/>
    </location>
</feature>
<feature type="region of interest" description="Disordered" evidence="2">
    <location>
        <begin position="441"/>
        <end position="495"/>
    </location>
</feature>
<organism>
    <name type="scientific">Rhizobium etli (strain CIAT 652)</name>
    <dbReference type="NCBI Taxonomy" id="491916"/>
    <lineage>
        <taxon>Bacteria</taxon>
        <taxon>Pseudomonadati</taxon>
        <taxon>Pseudomonadota</taxon>
        <taxon>Alphaproteobacteria</taxon>
        <taxon>Hyphomicrobiales</taxon>
        <taxon>Rhizobiaceae</taxon>
        <taxon>Rhizobium/Agrobacterium group</taxon>
        <taxon>Rhizobium</taxon>
    </lineage>
</organism>
<accession>B3PXV9</accession>
<protein>
    <recommendedName>
        <fullName evidence="1">Trigger factor</fullName>
        <shortName evidence="1">TF</shortName>
        <ecNumber evidence="1">5.2.1.8</ecNumber>
    </recommendedName>
    <alternativeName>
        <fullName evidence="1">PPIase</fullName>
    </alternativeName>
</protein>